<proteinExistence type="evidence at protein level"/>
<reference key="1">
    <citation type="submission" date="1999-08" db="EMBL/GenBank/DDBJ databases">
        <title>A novel Arabidopsis Golgi glycosyltransferase.</title>
        <authorList>
            <person name="Mogelsvang S."/>
            <person name="Dupree P."/>
        </authorList>
    </citation>
    <scope>NUCLEOTIDE SEQUENCE [MRNA]</scope>
    <source>
        <strain>cv. Columbia</strain>
    </source>
</reference>
<reference key="2">
    <citation type="submission" date="2014-01" db="EMBL/GenBank/DDBJ databases">
        <title>The plant glycosyltransferase clone collection for high-throughput functional genomics.</title>
        <authorList>
            <person name="Lao J."/>
            <person name="Oikawa A."/>
            <person name="Bromley J.R."/>
            <person name="Smith-Moritz A.M."/>
            <person name="Chiu T.-Y."/>
            <person name="Christiansen K.M."/>
            <person name="Hansen S.F."/>
            <person name="Suttangkakul A."/>
            <person name="Ebert B."/>
            <person name="Yang F."/>
            <person name="Vega-Sanchez M.E."/>
            <person name="Stonebloom S."/>
            <person name="Morrison S."/>
            <person name="McInerney P."/>
            <person name="Hadi M."/>
            <person name="Adams P.D."/>
            <person name="Ronald P.C."/>
            <person name="Loque D."/>
            <person name="Scheller H.V."/>
            <person name="Heazlewood J.L."/>
        </authorList>
    </citation>
    <scope>NUCLEOTIDE SEQUENCE [MRNA]</scope>
    <source>
        <strain>cv. Columbia</strain>
    </source>
</reference>
<reference key="3">
    <citation type="journal article" date="1999" name="Nature">
        <title>Sequence and analysis of chromosome 4 of the plant Arabidopsis thaliana.</title>
        <authorList>
            <person name="Mayer K.F.X."/>
            <person name="Schueller C."/>
            <person name="Wambutt R."/>
            <person name="Murphy G."/>
            <person name="Volckaert G."/>
            <person name="Pohl T."/>
            <person name="Duesterhoeft A."/>
            <person name="Stiekema W."/>
            <person name="Entian K.-D."/>
            <person name="Terryn N."/>
            <person name="Harris B."/>
            <person name="Ansorge W."/>
            <person name="Brandt P."/>
            <person name="Grivell L.A."/>
            <person name="Rieger M."/>
            <person name="Weichselgartner M."/>
            <person name="de Simone V."/>
            <person name="Obermaier B."/>
            <person name="Mache R."/>
            <person name="Mueller M."/>
            <person name="Kreis M."/>
            <person name="Delseny M."/>
            <person name="Puigdomenech P."/>
            <person name="Watson M."/>
            <person name="Schmidtheini T."/>
            <person name="Reichert B."/>
            <person name="Portetelle D."/>
            <person name="Perez-Alonso M."/>
            <person name="Boutry M."/>
            <person name="Bancroft I."/>
            <person name="Vos P."/>
            <person name="Hoheisel J."/>
            <person name="Zimmermann W."/>
            <person name="Wedler H."/>
            <person name="Ridley P."/>
            <person name="Langham S.-A."/>
            <person name="McCullagh B."/>
            <person name="Bilham L."/>
            <person name="Robben J."/>
            <person name="van der Schueren J."/>
            <person name="Grymonprez B."/>
            <person name="Chuang Y.-J."/>
            <person name="Vandenbussche F."/>
            <person name="Braeken M."/>
            <person name="Weltjens I."/>
            <person name="Voet M."/>
            <person name="Bastiaens I."/>
            <person name="Aert R."/>
            <person name="Defoor E."/>
            <person name="Weitzenegger T."/>
            <person name="Bothe G."/>
            <person name="Ramsperger U."/>
            <person name="Hilbert H."/>
            <person name="Braun M."/>
            <person name="Holzer E."/>
            <person name="Brandt A."/>
            <person name="Peters S."/>
            <person name="van Staveren M."/>
            <person name="Dirkse W."/>
            <person name="Mooijman P."/>
            <person name="Klein Lankhorst R."/>
            <person name="Rose M."/>
            <person name="Hauf J."/>
            <person name="Koetter P."/>
            <person name="Berneiser S."/>
            <person name="Hempel S."/>
            <person name="Feldpausch M."/>
            <person name="Lamberth S."/>
            <person name="Van den Daele H."/>
            <person name="De Keyser A."/>
            <person name="Buysshaert C."/>
            <person name="Gielen J."/>
            <person name="Villarroel R."/>
            <person name="De Clercq R."/>
            <person name="van Montagu M."/>
            <person name="Rogers J."/>
            <person name="Cronin A."/>
            <person name="Quail M.A."/>
            <person name="Bray-Allen S."/>
            <person name="Clark L."/>
            <person name="Doggett J."/>
            <person name="Hall S."/>
            <person name="Kay M."/>
            <person name="Lennard N."/>
            <person name="McLay K."/>
            <person name="Mayes R."/>
            <person name="Pettett A."/>
            <person name="Rajandream M.A."/>
            <person name="Lyne M."/>
            <person name="Benes V."/>
            <person name="Rechmann S."/>
            <person name="Borkova D."/>
            <person name="Bloecker H."/>
            <person name="Scharfe M."/>
            <person name="Grimm M."/>
            <person name="Loehnert T.-H."/>
            <person name="Dose S."/>
            <person name="de Haan M."/>
            <person name="Maarse A.C."/>
            <person name="Schaefer M."/>
            <person name="Mueller-Auer S."/>
            <person name="Gabel C."/>
            <person name="Fuchs M."/>
            <person name="Fartmann B."/>
            <person name="Granderath K."/>
            <person name="Dauner D."/>
            <person name="Herzl A."/>
            <person name="Neumann S."/>
            <person name="Argiriou A."/>
            <person name="Vitale D."/>
            <person name="Liguori R."/>
            <person name="Piravandi E."/>
            <person name="Massenet O."/>
            <person name="Quigley F."/>
            <person name="Clabauld G."/>
            <person name="Muendlein A."/>
            <person name="Felber R."/>
            <person name="Schnabl S."/>
            <person name="Hiller R."/>
            <person name="Schmidt W."/>
            <person name="Lecharny A."/>
            <person name="Aubourg S."/>
            <person name="Chefdor F."/>
            <person name="Cooke R."/>
            <person name="Berger C."/>
            <person name="Monfort A."/>
            <person name="Casacuberta E."/>
            <person name="Gibbons T."/>
            <person name="Weber N."/>
            <person name="Vandenbol M."/>
            <person name="Bargues M."/>
            <person name="Terol J."/>
            <person name="Torres A."/>
            <person name="Perez-Perez A."/>
            <person name="Purnelle B."/>
            <person name="Bent E."/>
            <person name="Johnson S."/>
            <person name="Tacon D."/>
            <person name="Jesse T."/>
            <person name="Heijnen L."/>
            <person name="Schwarz S."/>
            <person name="Scholler P."/>
            <person name="Heber S."/>
            <person name="Francs P."/>
            <person name="Bielke C."/>
            <person name="Frishman D."/>
            <person name="Haase D."/>
            <person name="Lemcke K."/>
            <person name="Mewes H.-W."/>
            <person name="Stocker S."/>
            <person name="Zaccaria P."/>
            <person name="Bevan M."/>
            <person name="Wilson R.K."/>
            <person name="de la Bastide M."/>
            <person name="Habermann K."/>
            <person name="Parnell L."/>
            <person name="Dedhia N."/>
            <person name="Gnoj L."/>
            <person name="Schutz K."/>
            <person name="Huang E."/>
            <person name="Spiegel L."/>
            <person name="Sekhon M."/>
            <person name="Murray J."/>
            <person name="Sheet P."/>
            <person name="Cordes M."/>
            <person name="Abu-Threideh J."/>
            <person name="Stoneking T."/>
            <person name="Kalicki J."/>
            <person name="Graves T."/>
            <person name="Harmon G."/>
            <person name="Edwards J."/>
            <person name="Latreille P."/>
            <person name="Courtney L."/>
            <person name="Cloud J."/>
            <person name="Abbott A."/>
            <person name="Scott K."/>
            <person name="Johnson D."/>
            <person name="Minx P."/>
            <person name="Bentley D."/>
            <person name="Fulton B."/>
            <person name="Miller N."/>
            <person name="Greco T."/>
            <person name="Kemp K."/>
            <person name="Kramer J."/>
            <person name="Fulton L."/>
            <person name="Mardis E."/>
            <person name="Dante M."/>
            <person name="Pepin K."/>
            <person name="Hillier L.W."/>
            <person name="Nelson J."/>
            <person name="Spieth J."/>
            <person name="Ryan E."/>
            <person name="Andrews S."/>
            <person name="Geisel C."/>
            <person name="Layman D."/>
            <person name="Du H."/>
            <person name="Ali J."/>
            <person name="Berghoff A."/>
            <person name="Jones K."/>
            <person name="Drone K."/>
            <person name="Cotton M."/>
            <person name="Joshu C."/>
            <person name="Antonoiu B."/>
            <person name="Zidanic M."/>
            <person name="Strong C."/>
            <person name="Sun H."/>
            <person name="Lamar B."/>
            <person name="Yordan C."/>
            <person name="Ma P."/>
            <person name="Zhong J."/>
            <person name="Preston R."/>
            <person name="Vil D."/>
            <person name="Shekher M."/>
            <person name="Matero A."/>
            <person name="Shah R."/>
            <person name="Swaby I.K."/>
            <person name="O'Shaughnessy A."/>
            <person name="Rodriguez M."/>
            <person name="Hoffman J."/>
            <person name="Till S."/>
            <person name="Granat S."/>
            <person name="Shohdy N."/>
            <person name="Hasegawa A."/>
            <person name="Hameed A."/>
            <person name="Lodhi M."/>
            <person name="Johnson A."/>
            <person name="Chen E."/>
            <person name="Marra M.A."/>
            <person name="Martienssen R."/>
            <person name="McCombie W.R."/>
        </authorList>
    </citation>
    <scope>NUCLEOTIDE SEQUENCE [LARGE SCALE GENOMIC DNA]</scope>
    <source>
        <strain>cv. Columbia</strain>
    </source>
</reference>
<reference key="4">
    <citation type="journal article" date="2017" name="Plant J.">
        <title>Araport11: a complete reannotation of the Arabidopsis thaliana reference genome.</title>
        <authorList>
            <person name="Cheng C.Y."/>
            <person name="Krishnakumar V."/>
            <person name="Chan A.P."/>
            <person name="Thibaud-Nissen F."/>
            <person name="Schobel S."/>
            <person name="Town C.D."/>
        </authorList>
    </citation>
    <scope>GENOME REANNOTATION</scope>
    <source>
        <strain>cv. Columbia</strain>
    </source>
</reference>
<reference key="5">
    <citation type="journal article" date="2003" name="Science">
        <title>Empirical analysis of transcriptional activity in the Arabidopsis genome.</title>
        <authorList>
            <person name="Yamada K."/>
            <person name="Lim J."/>
            <person name="Dale J.M."/>
            <person name="Chen H."/>
            <person name="Shinn P."/>
            <person name="Palm C.J."/>
            <person name="Southwick A.M."/>
            <person name="Wu H.C."/>
            <person name="Kim C.J."/>
            <person name="Nguyen M."/>
            <person name="Pham P.K."/>
            <person name="Cheuk R.F."/>
            <person name="Karlin-Newmann G."/>
            <person name="Liu S.X."/>
            <person name="Lam B."/>
            <person name="Sakano H."/>
            <person name="Wu T."/>
            <person name="Yu G."/>
            <person name="Miranda M."/>
            <person name="Quach H.L."/>
            <person name="Tripp M."/>
            <person name="Chang C.H."/>
            <person name="Lee J.M."/>
            <person name="Toriumi M.J."/>
            <person name="Chan M.M."/>
            <person name="Tang C.C."/>
            <person name="Onodera C.S."/>
            <person name="Deng J.M."/>
            <person name="Akiyama K."/>
            <person name="Ansari Y."/>
            <person name="Arakawa T."/>
            <person name="Banh J."/>
            <person name="Banno F."/>
            <person name="Bowser L."/>
            <person name="Brooks S.Y."/>
            <person name="Carninci P."/>
            <person name="Chao Q."/>
            <person name="Choy N."/>
            <person name="Enju A."/>
            <person name="Goldsmith A.D."/>
            <person name="Gurjal M."/>
            <person name="Hansen N.F."/>
            <person name="Hayashizaki Y."/>
            <person name="Johnson-Hopson C."/>
            <person name="Hsuan V.W."/>
            <person name="Iida K."/>
            <person name="Karnes M."/>
            <person name="Khan S."/>
            <person name="Koesema E."/>
            <person name="Ishida J."/>
            <person name="Jiang P.X."/>
            <person name="Jones T."/>
            <person name="Kawai J."/>
            <person name="Kamiya A."/>
            <person name="Meyers C."/>
            <person name="Nakajima M."/>
            <person name="Narusaka M."/>
            <person name="Seki M."/>
            <person name="Sakurai T."/>
            <person name="Satou M."/>
            <person name="Tamse R."/>
            <person name="Vaysberg M."/>
            <person name="Wallender E.K."/>
            <person name="Wong C."/>
            <person name="Yamamura Y."/>
            <person name="Yuan S."/>
            <person name="Shinozaki K."/>
            <person name="Davis R.W."/>
            <person name="Theologis A."/>
            <person name="Ecker J.R."/>
        </authorList>
    </citation>
    <scope>NUCLEOTIDE SEQUENCE [LARGE SCALE MRNA]</scope>
    <source>
        <strain>cv. Columbia</strain>
    </source>
</reference>
<reference key="6">
    <citation type="journal article" date="2002" name="Proc. Natl. Acad. Sci. U.S.A.">
        <title>An Arabidopsis gene encoding an alpha-xylosyltransferase involved in xyloglucan biosynthesis.</title>
        <authorList>
            <person name="Faik A."/>
            <person name="Price N.J."/>
            <person name="Raikhel N.V."/>
            <person name="Keegstra K."/>
        </authorList>
    </citation>
    <scope>GENE FAMILY</scope>
    <scope>NOMENCLATURE</scope>
</reference>
<reference key="7">
    <citation type="journal article" date="2006" name="J. Biol. Chem.">
        <title>Two xyloglucan xylosyltransferases catalyze the addition of multiple xylosyl residues to cellohexaose.</title>
        <authorList>
            <person name="Cavalier D.M."/>
            <person name="Keegstra K."/>
        </authorList>
    </citation>
    <scope>FUNCTION</scope>
    <scope>CATALYTIC ACTIVITY</scope>
</reference>
<reference key="8">
    <citation type="journal article" date="2008" name="Plant Cell">
        <title>Disrupting two Arabidopsis thaliana xylosyltransferase genes results in plants deficient in xyloglucan, a major primary cell wall component.</title>
        <authorList>
            <person name="Cavalier D.M."/>
            <person name="Lerouxel O."/>
            <person name="Neumetzler L."/>
            <person name="Yamauchi K."/>
            <person name="Reinecke A."/>
            <person name="Freshour G."/>
            <person name="Zabotina O.A."/>
            <person name="Hahn M.G."/>
            <person name="Burgert I."/>
            <person name="Pauly M."/>
            <person name="Raikhel N.V."/>
            <person name="Keegstra K."/>
        </authorList>
    </citation>
    <scope>FUNCTION</scope>
    <scope>DISRUPTION PHENOTYPE</scope>
</reference>
<reference key="9">
    <citation type="journal article" date="2008" name="Plant J.">
        <title>Arabidopsis XXT5 gene encodes a putative alpha-1,6-xylosyltransferase that is involved in xyloglucan biosynthesis.</title>
        <authorList>
            <person name="Zabotina O.A."/>
            <person name="van de Ven W.T."/>
            <person name="Freshour G."/>
            <person name="Drakakaki G."/>
            <person name="Cavalier D."/>
            <person name="Mouille G."/>
            <person name="Hahn M.G."/>
            <person name="Keegstra K."/>
            <person name="Raikhel N.V."/>
        </authorList>
    </citation>
    <scope>NOMENCLATURE</scope>
</reference>
<reference key="10">
    <citation type="journal article" date="2012" name="Plant Physiol.">
        <title>Xyloglucan xylosyltransferases XXT1, XXT2, and XXT5 and the glucan synthase CSLC4 form Golgi-localized multiprotein complexes.</title>
        <authorList>
            <person name="Chou Y.H."/>
            <person name="Pogorelko G."/>
            <person name="Zabotina O.A."/>
        </authorList>
    </citation>
    <scope>INTERACTION WITH XXT1; XXT2 AND XXT5</scope>
    <scope>SUBCELLULAR LOCATION</scope>
</reference>
<reference key="11">
    <citation type="journal article" date="2015" name="Plant Cell Physiol.">
        <title>Protein-protein interactions among xyloglucan-synthesizing enzymes and formation of Golgi-localized multiprotein complexes.</title>
        <authorList>
            <person name="Chou Y.H."/>
            <person name="Pogorelko G."/>
            <person name="Young Z.T."/>
            <person name="Zabotina O.A."/>
        </authorList>
    </citation>
    <scope>FUNCTION</scope>
    <scope>INTERACTION WITH FUT1 AND XLT2</scope>
    <scope>SUBCELLULAR LOCATION</scope>
</reference>
<sequence length="461" mass="53095">MIERCLGAYRCRRIQRALRQLKVTILCLLLTVVVLRSTIGAGKFGTPEQDLDEIRQHFHARKRGEPHRVLEEIQTGGDSSSGDGGGNSGGSNNYETFDINKIFVDEGEEEKPDPNKPYTLGPKISDWDEQRSDWLAKNPSFPNFIGPNKPRVLLVTGSAPKPCENPVGDHYLLKSIKNKIDYCRLHGIEIFYNMALLDAEMAGFWAKLPLIRKLLLSHPEIEFLWWMDSDAMFTDMAFELPWERYKDYNLVMHGWNEMVYDQKNWIGLNTGSFLLRNNQWALDLLDTWAPMGPKGKIREEAGKVLTRELKDRPVFEADDQSAMVYLLATQRDAWGNKVYLESGYYLHGYWGILVDRYEEMIENYHPGLGDHRWPLVTHFVGCKPCGKFGDYPVERCLKQMDRAFNFGDNQILQIYGFTHKSLASRKVKRVRNETSNPLEMKDELGLLHPAFKAVKVQTNQV</sequence>
<dbReference type="EC" id="2.4.2.39"/>
<dbReference type="EC" id="2.4.-.-"/>
<dbReference type="EMBL" id="AJ245571">
    <property type="protein sequence ID" value="CAC01674.1"/>
    <property type="molecule type" value="mRNA"/>
</dbReference>
<dbReference type="EMBL" id="KJ138768">
    <property type="protein sequence ID" value="AHL38708.1"/>
    <property type="molecule type" value="mRNA"/>
</dbReference>
<dbReference type="EMBL" id="AC002330">
    <property type="protein sequence ID" value="AAC78266.1"/>
    <property type="status" value="ALT_SEQ"/>
    <property type="molecule type" value="Genomic_DNA"/>
</dbReference>
<dbReference type="EMBL" id="AF069298">
    <property type="protein sequence ID" value="AAC19271.1"/>
    <property type="molecule type" value="Genomic_DNA"/>
</dbReference>
<dbReference type="EMBL" id="AL161494">
    <property type="protein sequence ID" value="CAB80743.1"/>
    <property type="status" value="ALT_SEQ"/>
    <property type="molecule type" value="Genomic_DNA"/>
</dbReference>
<dbReference type="EMBL" id="CP002687">
    <property type="protein sequence ID" value="AEE82181.1"/>
    <property type="molecule type" value="Genomic_DNA"/>
</dbReference>
<dbReference type="EMBL" id="AY057598">
    <property type="protein sequence ID" value="AAL14393.1"/>
    <property type="molecule type" value="mRNA"/>
</dbReference>
<dbReference type="EMBL" id="AY140029">
    <property type="protein sequence ID" value="AAM98170.1"/>
    <property type="molecule type" value="mRNA"/>
</dbReference>
<dbReference type="EMBL" id="BT006601">
    <property type="protein sequence ID" value="AAP31945.1"/>
    <property type="molecule type" value="mRNA"/>
</dbReference>
<dbReference type="PIR" id="H85031">
    <property type="entry name" value="H85031"/>
</dbReference>
<dbReference type="PIR" id="T01300">
    <property type="entry name" value="T01300"/>
</dbReference>
<dbReference type="RefSeq" id="NP_567241.1">
    <property type="nucleotide sequence ID" value="NM_116484.3"/>
</dbReference>
<dbReference type="SMR" id="O22775"/>
<dbReference type="BioGRID" id="13231">
    <property type="interactions" value="7"/>
</dbReference>
<dbReference type="FunCoup" id="O22775">
    <property type="interactions" value="294"/>
</dbReference>
<dbReference type="STRING" id="3702.O22775"/>
<dbReference type="CAZy" id="GT34">
    <property type="family name" value="Glycosyltransferase Family 34"/>
</dbReference>
<dbReference type="GlyCosmos" id="O22775">
    <property type="glycosylation" value="1 site, No reported glycans"/>
</dbReference>
<dbReference type="GlyGen" id="O22775">
    <property type="glycosylation" value="1 site"/>
</dbReference>
<dbReference type="PaxDb" id="3702-AT4G02500.1"/>
<dbReference type="ProteomicsDB" id="242408"/>
<dbReference type="EnsemblPlants" id="AT4G02500.1">
    <property type="protein sequence ID" value="AT4G02500.1"/>
    <property type="gene ID" value="AT4G02500"/>
</dbReference>
<dbReference type="GeneID" id="827940"/>
<dbReference type="Gramene" id="AT4G02500.1">
    <property type="protein sequence ID" value="AT4G02500.1"/>
    <property type="gene ID" value="AT4G02500"/>
</dbReference>
<dbReference type="KEGG" id="ath:AT4G02500"/>
<dbReference type="Araport" id="AT4G02500"/>
<dbReference type="TAIR" id="AT4G02500">
    <property type="gene designation" value="XT2"/>
</dbReference>
<dbReference type="eggNOG" id="KOG4748">
    <property type="taxonomic scope" value="Eukaryota"/>
</dbReference>
<dbReference type="HOGENOM" id="CLU_034328_1_1_1"/>
<dbReference type="InParanoid" id="O22775"/>
<dbReference type="OMA" id="QKERWAD"/>
<dbReference type="OrthoDB" id="205108at2759"/>
<dbReference type="PhylomeDB" id="O22775"/>
<dbReference type="BioCyc" id="ARA:AT4G02500-MONOMER"/>
<dbReference type="BioCyc" id="MetaCyc:AT4G02500-MONOMER"/>
<dbReference type="BRENDA" id="2.4.2.39">
    <property type="organism ID" value="399"/>
</dbReference>
<dbReference type="PRO" id="PR:O22775"/>
<dbReference type="Proteomes" id="UP000006548">
    <property type="component" value="Chromosome 4"/>
</dbReference>
<dbReference type="ExpressionAtlas" id="O22775">
    <property type="expression patterns" value="baseline and differential"/>
</dbReference>
<dbReference type="GO" id="GO:0005829">
    <property type="term" value="C:cytosol"/>
    <property type="evidence" value="ECO:0007005"/>
    <property type="project" value="TAIR"/>
</dbReference>
<dbReference type="GO" id="GO:0005768">
    <property type="term" value="C:endosome"/>
    <property type="evidence" value="ECO:0007005"/>
    <property type="project" value="TAIR"/>
</dbReference>
<dbReference type="GO" id="GO:0005794">
    <property type="term" value="C:Golgi apparatus"/>
    <property type="evidence" value="ECO:0007005"/>
    <property type="project" value="TAIR"/>
</dbReference>
<dbReference type="GO" id="GO:0000139">
    <property type="term" value="C:Golgi membrane"/>
    <property type="evidence" value="ECO:0007669"/>
    <property type="project" value="UniProtKB-SubCell"/>
</dbReference>
<dbReference type="GO" id="GO:0000138">
    <property type="term" value="C:Golgi trans cisterna"/>
    <property type="evidence" value="ECO:0007005"/>
    <property type="project" value="TAIR"/>
</dbReference>
<dbReference type="GO" id="GO:0005802">
    <property type="term" value="C:trans-Golgi network"/>
    <property type="evidence" value="ECO:0007005"/>
    <property type="project" value="TAIR"/>
</dbReference>
<dbReference type="GO" id="GO:0042803">
    <property type="term" value="F:protein homodimerization activity"/>
    <property type="evidence" value="ECO:0000353"/>
    <property type="project" value="UniProtKB"/>
</dbReference>
<dbReference type="GO" id="GO:0035252">
    <property type="term" value="F:UDP-xylosyltransferase activity"/>
    <property type="evidence" value="ECO:0000314"/>
    <property type="project" value="TAIR"/>
</dbReference>
<dbReference type="GO" id="GO:0033843">
    <property type="term" value="F:xyloglucan 6-xylosyltransferase activity"/>
    <property type="evidence" value="ECO:0000314"/>
    <property type="project" value="UniProtKB"/>
</dbReference>
<dbReference type="GO" id="GO:0000271">
    <property type="term" value="P:polysaccharide biosynthetic process"/>
    <property type="evidence" value="ECO:0000314"/>
    <property type="project" value="TAIR"/>
</dbReference>
<dbReference type="GO" id="GO:0010411">
    <property type="term" value="P:xyloglucan metabolic process"/>
    <property type="evidence" value="ECO:0000314"/>
    <property type="project" value="TAIR"/>
</dbReference>
<dbReference type="FunFam" id="3.90.550.10:FF:000032">
    <property type="entry name" value="xyloglucan 6-xylosyltransferase 2"/>
    <property type="match status" value="1"/>
</dbReference>
<dbReference type="Gene3D" id="3.90.550.10">
    <property type="entry name" value="Spore Coat Polysaccharide Biosynthesis Protein SpsA, Chain A"/>
    <property type="match status" value="1"/>
</dbReference>
<dbReference type="InterPro" id="IPR008630">
    <property type="entry name" value="Glyco_trans_34"/>
</dbReference>
<dbReference type="InterPro" id="IPR029044">
    <property type="entry name" value="Nucleotide-diphossugar_trans"/>
</dbReference>
<dbReference type="PANTHER" id="PTHR31311:SF5">
    <property type="entry name" value="XYLOGLUCAN 6-XYLOSYLTRANSFERASE 2"/>
    <property type="match status" value="1"/>
</dbReference>
<dbReference type="PANTHER" id="PTHR31311">
    <property type="entry name" value="XYLOGLUCAN 6-XYLOSYLTRANSFERASE 5-RELATED-RELATED"/>
    <property type="match status" value="1"/>
</dbReference>
<dbReference type="Pfam" id="PF05637">
    <property type="entry name" value="Glyco_transf_34"/>
    <property type="match status" value="1"/>
</dbReference>
<organism>
    <name type="scientific">Arabidopsis thaliana</name>
    <name type="common">Mouse-ear cress</name>
    <dbReference type="NCBI Taxonomy" id="3702"/>
    <lineage>
        <taxon>Eukaryota</taxon>
        <taxon>Viridiplantae</taxon>
        <taxon>Streptophyta</taxon>
        <taxon>Embryophyta</taxon>
        <taxon>Tracheophyta</taxon>
        <taxon>Spermatophyta</taxon>
        <taxon>Magnoliopsida</taxon>
        <taxon>eudicotyledons</taxon>
        <taxon>Gunneridae</taxon>
        <taxon>Pentapetalae</taxon>
        <taxon>rosids</taxon>
        <taxon>malvids</taxon>
        <taxon>Brassicales</taxon>
        <taxon>Brassicaceae</taxon>
        <taxon>Camelineae</taxon>
        <taxon>Arabidopsis</taxon>
    </lineage>
</organism>
<name>XXT2_ARATH</name>
<protein>
    <recommendedName>
        <fullName>Xyloglucan 6-xylosyltransferase 2</fullName>
        <shortName>AtXT2</shortName>
        <ecNumber>2.4.2.39</ecNumber>
    </recommendedName>
    <alternativeName>
        <fullName>Putative glycosyltransferase 2</fullName>
        <shortName>AtGT2</shortName>
        <ecNumber>2.4.-.-</ecNumber>
    </alternativeName>
</protein>
<keyword id="KW-0325">Glycoprotein</keyword>
<keyword id="KW-0328">Glycosyltransferase</keyword>
<keyword id="KW-0333">Golgi apparatus</keyword>
<keyword id="KW-0472">Membrane</keyword>
<keyword id="KW-1185">Reference proteome</keyword>
<keyword id="KW-0735">Signal-anchor</keyword>
<keyword id="KW-0808">Transferase</keyword>
<keyword id="KW-0812">Transmembrane</keyword>
<keyword id="KW-1133">Transmembrane helix</keyword>
<comment type="function">
    <text evidence="3 4 6">Xylosyltransferase specific to UDP-D-xylose that accepts both cellopentaose and cellohexaose as substrates, with a better use of cellohexaose, to produce xyloglucan. Adds preferentially the first xylosyl residue to the fourth glucosyl residue from the reducing end of both acceptors. Transfer one xylose mainly to the second glucose residue from the non-reducing end. The acceptor should have a minimum of four glucose residues (PubMed:16982611, PubMed:18544630). Associates with other xyloglucan-synthesizing enzymes to form multiprotein complexes for xyloglucan synthesis in the Golgi (PubMed:25392066).</text>
</comment>
<comment type="catalytic activity">
    <reaction evidence="3">
        <text>Transfers an alpha-D-xylosyl residue from UDP-D-xylose to a glucose residue in xyloglucan, forming an alpha-(1-&gt;6)-D-xylosyl-D-glucose linkage.</text>
        <dbReference type="EC" id="2.4.2.39"/>
    </reaction>
</comment>
<comment type="subunit">
    <text evidence="5 6">Homodimer (PubMed:22665445). Interacts with XXT1 and XXT5 (PubMed:22665445). Interacts with FUT1 and XLT2 (PubMed:25392066).</text>
</comment>
<comment type="subcellular location">
    <subcellularLocation>
        <location evidence="5 6">Golgi apparatus membrane</location>
        <topology evidence="8">Single-pass type II membrane protein</topology>
    </subcellularLocation>
</comment>
<comment type="disruption phenotype">
    <text evidence="4">Reduced xyloglucan content.</text>
</comment>
<comment type="similarity">
    <text evidence="7">Belongs to the glycosyltransferase 34 family.</text>
</comment>
<comment type="sequence caution" evidence="7">
    <conflict type="erroneous gene model prediction">
        <sequence resource="EMBL-CDS" id="AAC78266"/>
    </conflict>
</comment>
<comment type="sequence caution" evidence="7">
    <conflict type="erroneous gene model prediction">
        <sequence resource="EMBL-CDS" id="CAB80743"/>
    </conflict>
</comment>
<feature type="chain" id="PRO_0000215170" description="Xyloglucan 6-xylosyltransferase 2">
    <location>
        <begin position="1"/>
        <end position="461"/>
    </location>
</feature>
<feature type="topological domain" description="Cytoplasmic" evidence="1">
    <location>
        <begin position="1"/>
        <end position="20"/>
    </location>
</feature>
<feature type="transmembrane region" description="Helical; Signal-anchor for type II membrane protein" evidence="1">
    <location>
        <begin position="21"/>
        <end position="40"/>
    </location>
</feature>
<feature type="topological domain" description="Lumenal" evidence="1">
    <location>
        <begin position="41"/>
        <end position="461"/>
    </location>
</feature>
<feature type="region of interest" description="Disordered" evidence="2">
    <location>
        <begin position="74"/>
        <end position="95"/>
    </location>
</feature>
<feature type="glycosylation site" description="N-linked (GlcNAc...) asparagine" evidence="1">
    <location>
        <position position="432"/>
    </location>
</feature>
<gene>
    <name type="primary">XXT2</name>
    <name type="synonym">GT2</name>
    <name type="synonym">GTL5</name>
    <name type="synonym">XT2</name>
    <name type="ordered locus">At4g02500</name>
    <name type="ORF">T10P11.20</name>
    <name type="ORF">T14P8.23</name>
</gene>
<evidence type="ECO:0000255" key="1"/>
<evidence type="ECO:0000256" key="2">
    <source>
        <dbReference type="SAM" id="MobiDB-lite"/>
    </source>
</evidence>
<evidence type="ECO:0000269" key="3">
    <source>
    </source>
</evidence>
<evidence type="ECO:0000269" key="4">
    <source>
    </source>
</evidence>
<evidence type="ECO:0000269" key="5">
    <source>
    </source>
</evidence>
<evidence type="ECO:0000269" key="6">
    <source>
    </source>
</evidence>
<evidence type="ECO:0000305" key="7"/>
<evidence type="ECO:0000305" key="8">
    <source>
    </source>
</evidence>
<accession>O22775</accession>
<accession>Q9SYY3</accession>
<accession>W8QNH8</accession>